<dbReference type="EMBL" id="CP000713">
    <property type="protein sequence ID" value="ABQ94369.1"/>
    <property type="molecule type" value="Genomic_DNA"/>
</dbReference>
<dbReference type="SMR" id="A5WFC8"/>
<dbReference type="STRING" id="349106.PsycPRwf_1424"/>
<dbReference type="KEGG" id="prw:PsycPRwf_1424"/>
<dbReference type="eggNOG" id="COG0632">
    <property type="taxonomic scope" value="Bacteria"/>
</dbReference>
<dbReference type="HOGENOM" id="CLU_087936_3_0_6"/>
<dbReference type="GO" id="GO:0005737">
    <property type="term" value="C:cytoplasm"/>
    <property type="evidence" value="ECO:0007669"/>
    <property type="project" value="UniProtKB-SubCell"/>
</dbReference>
<dbReference type="GO" id="GO:0009379">
    <property type="term" value="C:Holliday junction helicase complex"/>
    <property type="evidence" value="ECO:0007669"/>
    <property type="project" value="InterPro"/>
</dbReference>
<dbReference type="GO" id="GO:0048476">
    <property type="term" value="C:Holliday junction resolvase complex"/>
    <property type="evidence" value="ECO:0007669"/>
    <property type="project" value="UniProtKB-UniRule"/>
</dbReference>
<dbReference type="GO" id="GO:0005524">
    <property type="term" value="F:ATP binding"/>
    <property type="evidence" value="ECO:0007669"/>
    <property type="project" value="InterPro"/>
</dbReference>
<dbReference type="GO" id="GO:0000400">
    <property type="term" value="F:four-way junction DNA binding"/>
    <property type="evidence" value="ECO:0007669"/>
    <property type="project" value="UniProtKB-UniRule"/>
</dbReference>
<dbReference type="GO" id="GO:0009378">
    <property type="term" value="F:four-way junction helicase activity"/>
    <property type="evidence" value="ECO:0007669"/>
    <property type="project" value="InterPro"/>
</dbReference>
<dbReference type="GO" id="GO:0006310">
    <property type="term" value="P:DNA recombination"/>
    <property type="evidence" value="ECO:0007669"/>
    <property type="project" value="UniProtKB-UniRule"/>
</dbReference>
<dbReference type="GO" id="GO:0006281">
    <property type="term" value="P:DNA repair"/>
    <property type="evidence" value="ECO:0007669"/>
    <property type="project" value="UniProtKB-UniRule"/>
</dbReference>
<dbReference type="CDD" id="cd14332">
    <property type="entry name" value="UBA_RuvA_C"/>
    <property type="match status" value="1"/>
</dbReference>
<dbReference type="Gene3D" id="1.10.150.20">
    <property type="entry name" value="5' to 3' exonuclease, C-terminal subdomain"/>
    <property type="match status" value="1"/>
</dbReference>
<dbReference type="Gene3D" id="1.10.8.10">
    <property type="entry name" value="DNA helicase RuvA subunit, C-terminal domain"/>
    <property type="match status" value="1"/>
</dbReference>
<dbReference type="Gene3D" id="2.40.50.140">
    <property type="entry name" value="Nucleic acid-binding proteins"/>
    <property type="match status" value="1"/>
</dbReference>
<dbReference type="HAMAP" id="MF_00031">
    <property type="entry name" value="DNA_HJ_migration_RuvA"/>
    <property type="match status" value="1"/>
</dbReference>
<dbReference type="InterPro" id="IPR013849">
    <property type="entry name" value="DNA_helicase_Holl-junc_RuvA_I"/>
</dbReference>
<dbReference type="InterPro" id="IPR003583">
    <property type="entry name" value="Hlx-hairpin-Hlx_DNA-bd_motif"/>
</dbReference>
<dbReference type="InterPro" id="IPR012340">
    <property type="entry name" value="NA-bd_OB-fold"/>
</dbReference>
<dbReference type="InterPro" id="IPR000085">
    <property type="entry name" value="RuvA"/>
</dbReference>
<dbReference type="InterPro" id="IPR010994">
    <property type="entry name" value="RuvA_2-like"/>
</dbReference>
<dbReference type="InterPro" id="IPR011114">
    <property type="entry name" value="RuvA_C"/>
</dbReference>
<dbReference type="InterPro" id="IPR036267">
    <property type="entry name" value="RuvA_C_sf"/>
</dbReference>
<dbReference type="NCBIfam" id="TIGR00084">
    <property type="entry name" value="ruvA"/>
    <property type="match status" value="1"/>
</dbReference>
<dbReference type="Pfam" id="PF14520">
    <property type="entry name" value="HHH_5"/>
    <property type="match status" value="1"/>
</dbReference>
<dbReference type="Pfam" id="PF07499">
    <property type="entry name" value="RuvA_C"/>
    <property type="match status" value="1"/>
</dbReference>
<dbReference type="Pfam" id="PF01330">
    <property type="entry name" value="RuvA_N"/>
    <property type="match status" value="1"/>
</dbReference>
<dbReference type="SMART" id="SM00278">
    <property type="entry name" value="HhH1"/>
    <property type="match status" value="2"/>
</dbReference>
<dbReference type="SUPFAM" id="SSF46929">
    <property type="entry name" value="DNA helicase RuvA subunit, C-terminal domain"/>
    <property type="match status" value="1"/>
</dbReference>
<dbReference type="SUPFAM" id="SSF50249">
    <property type="entry name" value="Nucleic acid-binding proteins"/>
    <property type="match status" value="1"/>
</dbReference>
<dbReference type="SUPFAM" id="SSF47781">
    <property type="entry name" value="RuvA domain 2-like"/>
    <property type="match status" value="1"/>
</dbReference>
<gene>
    <name evidence="1" type="primary">ruvA</name>
    <name type="ordered locus">PsycPRwf_1424</name>
</gene>
<feature type="chain" id="PRO_1000071020" description="Holliday junction branch migration complex subunit RuvA">
    <location>
        <begin position="1"/>
        <end position="210"/>
    </location>
</feature>
<feature type="region of interest" description="Domain I" evidence="1">
    <location>
        <begin position="1"/>
        <end position="64"/>
    </location>
</feature>
<feature type="region of interest" description="Domain II" evidence="1">
    <location>
        <begin position="65"/>
        <end position="143"/>
    </location>
</feature>
<feature type="region of interest" description="Flexible linker" evidence="1">
    <location>
        <begin position="144"/>
        <end position="154"/>
    </location>
</feature>
<feature type="region of interest" description="Domain III" evidence="1">
    <location>
        <begin position="155"/>
        <end position="210"/>
    </location>
</feature>
<protein>
    <recommendedName>
        <fullName evidence="1">Holliday junction branch migration complex subunit RuvA</fullName>
    </recommendedName>
</protein>
<organism>
    <name type="scientific">Psychrobacter sp. (strain PRwf-1)</name>
    <dbReference type="NCBI Taxonomy" id="349106"/>
    <lineage>
        <taxon>Bacteria</taxon>
        <taxon>Pseudomonadati</taxon>
        <taxon>Pseudomonadota</taxon>
        <taxon>Gammaproteobacteria</taxon>
        <taxon>Moraxellales</taxon>
        <taxon>Moraxellaceae</taxon>
        <taxon>Psychrobacter</taxon>
    </lineage>
</organism>
<keyword id="KW-0963">Cytoplasm</keyword>
<keyword id="KW-0227">DNA damage</keyword>
<keyword id="KW-0233">DNA recombination</keyword>
<keyword id="KW-0234">DNA repair</keyword>
<keyword id="KW-0238">DNA-binding</keyword>
<accession>A5WFC8</accession>
<reference key="1">
    <citation type="submission" date="2007-05" db="EMBL/GenBank/DDBJ databases">
        <title>Complete sequence of chromosome of Psychrobacter sp. PRwf-1.</title>
        <authorList>
            <consortium name="US DOE Joint Genome Institute"/>
            <person name="Copeland A."/>
            <person name="Lucas S."/>
            <person name="Lapidus A."/>
            <person name="Barry K."/>
            <person name="Detter J.C."/>
            <person name="Glavina del Rio T."/>
            <person name="Hammon N."/>
            <person name="Israni S."/>
            <person name="Dalin E."/>
            <person name="Tice H."/>
            <person name="Pitluck S."/>
            <person name="Chain P."/>
            <person name="Malfatti S."/>
            <person name="Shin M."/>
            <person name="Vergez L."/>
            <person name="Schmutz J."/>
            <person name="Larimer F."/>
            <person name="Land M."/>
            <person name="Hauser L."/>
            <person name="Kyrpides N."/>
            <person name="Kim E."/>
            <person name="Tiedje J."/>
            <person name="Richardson P."/>
        </authorList>
    </citation>
    <scope>NUCLEOTIDE SEQUENCE [LARGE SCALE GENOMIC DNA]</scope>
    <source>
        <strain>PRwf-1</strain>
    </source>
</reference>
<name>RUVA_PSYWF</name>
<proteinExistence type="inferred from homology"/>
<comment type="function">
    <text evidence="1">The RuvA-RuvB-RuvC complex processes Holliday junction (HJ) DNA during genetic recombination and DNA repair, while the RuvA-RuvB complex plays an important role in the rescue of blocked DNA replication forks via replication fork reversal (RFR). RuvA specifically binds to HJ cruciform DNA, conferring on it an open structure. The RuvB hexamer acts as an ATP-dependent pump, pulling dsDNA into and through the RuvAB complex. HJ branch migration allows RuvC to scan DNA until it finds its consensus sequence, where it cleaves and resolves the cruciform DNA.</text>
</comment>
<comment type="subunit">
    <text evidence="1">Homotetramer. Forms an RuvA(8)-RuvB(12)-Holliday junction (HJ) complex. HJ DNA is sandwiched between 2 RuvA tetramers; dsDNA enters through RuvA and exits via RuvB. An RuvB hexamer assembles on each DNA strand where it exits the tetramer. Each RuvB hexamer is contacted by two RuvA subunits (via domain III) on 2 adjacent RuvB subunits; this complex drives branch migration. In the full resolvosome a probable DNA-RuvA(4)-RuvB(12)-RuvC(2) complex forms which resolves the HJ.</text>
</comment>
<comment type="subcellular location">
    <subcellularLocation>
        <location evidence="1">Cytoplasm</location>
    </subcellularLocation>
</comment>
<comment type="domain">
    <text evidence="1">Has three domains with a flexible linker between the domains II and III and assumes an 'L' shape. Domain III is highly mobile and contacts RuvB.</text>
</comment>
<comment type="similarity">
    <text evidence="1">Belongs to the RuvA family.</text>
</comment>
<evidence type="ECO:0000255" key="1">
    <source>
        <dbReference type="HAMAP-Rule" id="MF_00031"/>
    </source>
</evidence>
<sequence>MIGLIEGRVCHLSAPVACLMTASGVGYEVELPLPDFCQLQLEAMASLWTHLHVREDAQLLYGFLHPTERDVFRQLIRVNGVGAKMALAMMSTFSATELKHCIDTENDAALTRVPGIGKKTAQRLLIELKGKFDHIQSDMSLLTEVEQQIGIAANSEGVILAEVESALISLGYRDKEAQQAIKAARETDAGQQLVDTQSLLKLTLKQLSNF</sequence>